<feature type="chain" id="PRO_1000018250" description="Tryptophan synthase alpha chain">
    <location>
        <begin position="1"/>
        <end position="271"/>
    </location>
</feature>
<feature type="active site" description="Proton acceptor" evidence="1">
    <location>
        <position position="51"/>
    </location>
</feature>
<feature type="active site" description="Proton acceptor" evidence="1">
    <location>
        <position position="62"/>
    </location>
</feature>
<organism>
    <name type="scientific">Prochlorococcus marinus (strain NATL2A)</name>
    <dbReference type="NCBI Taxonomy" id="59920"/>
    <lineage>
        <taxon>Bacteria</taxon>
        <taxon>Bacillati</taxon>
        <taxon>Cyanobacteriota</taxon>
        <taxon>Cyanophyceae</taxon>
        <taxon>Synechococcales</taxon>
        <taxon>Prochlorococcaceae</taxon>
        <taxon>Prochlorococcus</taxon>
    </lineage>
</organism>
<accession>Q46LX8</accession>
<gene>
    <name evidence="1" type="primary">trpA</name>
    <name type="ordered locus">PMN2A_0008</name>
</gene>
<proteinExistence type="inferred from homology"/>
<name>TRPA_PROMT</name>
<reference key="1">
    <citation type="journal article" date="2007" name="PLoS Genet.">
        <title>Patterns and implications of gene gain and loss in the evolution of Prochlorococcus.</title>
        <authorList>
            <person name="Kettler G.C."/>
            <person name="Martiny A.C."/>
            <person name="Huang K."/>
            <person name="Zucker J."/>
            <person name="Coleman M.L."/>
            <person name="Rodrigue S."/>
            <person name="Chen F."/>
            <person name="Lapidus A."/>
            <person name="Ferriera S."/>
            <person name="Johnson J."/>
            <person name="Steglich C."/>
            <person name="Church G.M."/>
            <person name="Richardson P."/>
            <person name="Chisholm S.W."/>
        </authorList>
    </citation>
    <scope>NUCLEOTIDE SEQUENCE [LARGE SCALE GENOMIC DNA]</scope>
    <source>
        <strain>NATL2A</strain>
    </source>
</reference>
<protein>
    <recommendedName>
        <fullName evidence="1">Tryptophan synthase alpha chain</fullName>
        <ecNumber evidence="1">4.2.1.20</ecNumber>
    </recommendedName>
</protein>
<evidence type="ECO:0000255" key="1">
    <source>
        <dbReference type="HAMAP-Rule" id="MF_00131"/>
    </source>
</evidence>
<keyword id="KW-0028">Amino-acid biosynthesis</keyword>
<keyword id="KW-0057">Aromatic amino acid biosynthesis</keyword>
<keyword id="KW-0456">Lyase</keyword>
<keyword id="KW-1185">Reference proteome</keyword>
<keyword id="KW-0822">Tryptophan biosynthesis</keyword>
<comment type="function">
    <text evidence="1">The alpha subunit is responsible for the aldol cleavage of indoleglycerol phosphate to indole and glyceraldehyde 3-phosphate.</text>
</comment>
<comment type="catalytic activity">
    <reaction evidence="1">
        <text>(1S,2R)-1-C-(indol-3-yl)glycerol 3-phosphate + L-serine = D-glyceraldehyde 3-phosphate + L-tryptophan + H2O</text>
        <dbReference type="Rhea" id="RHEA:10532"/>
        <dbReference type="ChEBI" id="CHEBI:15377"/>
        <dbReference type="ChEBI" id="CHEBI:33384"/>
        <dbReference type="ChEBI" id="CHEBI:57912"/>
        <dbReference type="ChEBI" id="CHEBI:58866"/>
        <dbReference type="ChEBI" id="CHEBI:59776"/>
        <dbReference type="EC" id="4.2.1.20"/>
    </reaction>
</comment>
<comment type="pathway">
    <text evidence="1">Amino-acid biosynthesis; L-tryptophan biosynthesis; L-tryptophan from chorismate: step 5/5.</text>
</comment>
<comment type="subunit">
    <text evidence="1">Tetramer of two alpha and two beta chains.</text>
</comment>
<comment type="similarity">
    <text evidence="1">Belongs to the TrpA family.</text>
</comment>
<dbReference type="EC" id="4.2.1.20" evidence="1"/>
<dbReference type="EMBL" id="CP000095">
    <property type="protein sequence ID" value="AAZ57500.1"/>
    <property type="molecule type" value="Genomic_DNA"/>
</dbReference>
<dbReference type="RefSeq" id="WP_011293542.1">
    <property type="nucleotide sequence ID" value="NC_007335.2"/>
</dbReference>
<dbReference type="SMR" id="Q46LX8"/>
<dbReference type="STRING" id="59920.PMN2A_0008"/>
<dbReference type="KEGG" id="pmn:PMN2A_0008"/>
<dbReference type="HOGENOM" id="CLU_016734_0_2_3"/>
<dbReference type="OrthoDB" id="9804578at2"/>
<dbReference type="PhylomeDB" id="Q46LX8"/>
<dbReference type="UniPathway" id="UPA00035">
    <property type="reaction ID" value="UER00044"/>
</dbReference>
<dbReference type="Proteomes" id="UP000002535">
    <property type="component" value="Chromosome"/>
</dbReference>
<dbReference type="GO" id="GO:0005829">
    <property type="term" value="C:cytosol"/>
    <property type="evidence" value="ECO:0007669"/>
    <property type="project" value="TreeGrafter"/>
</dbReference>
<dbReference type="GO" id="GO:0004834">
    <property type="term" value="F:tryptophan synthase activity"/>
    <property type="evidence" value="ECO:0007669"/>
    <property type="project" value="UniProtKB-UniRule"/>
</dbReference>
<dbReference type="CDD" id="cd04724">
    <property type="entry name" value="Tryptophan_synthase_alpha"/>
    <property type="match status" value="1"/>
</dbReference>
<dbReference type="FunFam" id="3.20.20.70:FF:000037">
    <property type="entry name" value="Tryptophan synthase alpha chain"/>
    <property type="match status" value="1"/>
</dbReference>
<dbReference type="Gene3D" id="3.20.20.70">
    <property type="entry name" value="Aldolase class I"/>
    <property type="match status" value="1"/>
</dbReference>
<dbReference type="HAMAP" id="MF_00131">
    <property type="entry name" value="Trp_synth_alpha"/>
    <property type="match status" value="1"/>
</dbReference>
<dbReference type="InterPro" id="IPR013785">
    <property type="entry name" value="Aldolase_TIM"/>
</dbReference>
<dbReference type="InterPro" id="IPR011060">
    <property type="entry name" value="RibuloseP-bd_barrel"/>
</dbReference>
<dbReference type="InterPro" id="IPR018204">
    <property type="entry name" value="Trp_synthase_alpha_AS"/>
</dbReference>
<dbReference type="InterPro" id="IPR002028">
    <property type="entry name" value="Trp_synthase_suA"/>
</dbReference>
<dbReference type="NCBIfam" id="TIGR00262">
    <property type="entry name" value="trpA"/>
    <property type="match status" value="1"/>
</dbReference>
<dbReference type="PANTHER" id="PTHR43406:SF1">
    <property type="entry name" value="TRYPTOPHAN SYNTHASE ALPHA CHAIN, CHLOROPLASTIC"/>
    <property type="match status" value="1"/>
</dbReference>
<dbReference type="PANTHER" id="PTHR43406">
    <property type="entry name" value="TRYPTOPHAN SYNTHASE, ALPHA CHAIN"/>
    <property type="match status" value="1"/>
</dbReference>
<dbReference type="Pfam" id="PF00290">
    <property type="entry name" value="Trp_syntA"/>
    <property type="match status" value="1"/>
</dbReference>
<dbReference type="SUPFAM" id="SSF51366">
    <property type="entry name" value="Ribulose-phoshate binding barrel"/>
    <property type="match status" value="1"/>
</dbReference>
<dbReference type="PROSITE" id="PS00167">
    <property type="entry name" value="TRP_SYNTHASE_ALPHA"/>
    <property type="match status" value="1"/>
</dbReference>
<sequence>MKSTNISRSFSKIKKEKRIALMPFLMAGDPDLETTAKILLELQANGADMIELGIPYSDPLADGPIIQLAASRALSAGTSPDRVFKMLFELRDQLTIPIILFTYSNPLINKGLEEFCLQASKVGVSGLVVPDLPLEEAEKLSDIAESKEIDLVLLVAPTTPKDRMKRIAATSNGFTYLVSVTGVTGERSSLEDNVGSLVQQLKDSSSSPIAVGFGISDVKHIEQVREWGADGAIVGSALVKRIANASIEMKVEEAGSFCKELRAATNEYFFK</sequence>